<evidence type="ECO:0000250" key="1">
    <source>
        <dbReference type="UniProtKB" id="A0A0J9XL55"/>
    </source>
</evidence>
<evidence type="ECO:0000250" key="2">
    <source>
        <dbReference type="UniProtKB" id="A0A5J6BJN2"/>
    </source>
</evidence>
<evidence type="ECO:0000250" key="3">
    <source>
        <dbReference type="UniProtKB" id="Q1K8B6"/>
    </source>
</evidence>
<evidence type="ECO:0000250" key="4">
    <source>
        <dbReference type="UniProtKB" id="Q7Z9M7"/>
    </source>
</evidence>
<evidence type="ECO:0000255" key="5"/>
<evidence type="ECO:0000255" key="6">
    <source>
        <dbReference type="PROSITE-ProRule" id="PRU00498"/>
    </source>
</evidence>
<evidence type="ECO:0000303" key="7">
    <source>
    </source>
</evidence>
<evidence type="ECO:0000305" key="8"/>
<evidence type="ECO:0000305" key="9">
    <source>
    </source>
</evidence>
<proteinExistence type="inferred from homology"/>
<reference key="1">
    <citation type="submission" date="2014-03" db="EMBL/GenBank/DDBJ databases">
        <authorList>
            <person name="Casaregola S."/>
        </authorList>
    </citation>
    <scope>NUCLEOTIDE SEQUENCE [LARGE SCALE GENOMIC DNA]</scope>
    <source>
        <strain>CLIB 918</strain>
    </source>
</reference>
<reference key="2">
    <citation type="journal article" date="2017" name="Biotechnol. Biofuels">
        <title>The yeast Geotrichum candidum encodes functional lytic polysaccharide monooxygenases.</title>
        <authorList>
            <person name="Ladeveze S."/>
            <person name="Haon M."/>
            <person name="Villares A."/>
            <person name="Cathala B."/>
            <person name="Grisel S."/>
            <person name="Herpoel-Gimbert I."/>
            <person name="Henrissat B."/>
            <person name="Berrin J.G."/>
        </authorList>
    </citation>
    <scope>FUNCTION</scope>
</reference>
<dbReference type="EC" id="1.14.99.56" evidence="9"/>
<dbReference type="EMBL" id="CCBN010000008">
    <property type="protein sequence ID" value="CDO54774.1"/>
    <property type="molecule type" value="Genomic_DNA"/>
</dbReference>
<dbReference type="SMR" id="A0A0J9XBC9"/>
<dbReference type="STRING" id="1173061.A0A0J9XBC9"/>
<dbReference type="OrthoDB" id="4090429at2759"/>
<dbReference type="Proteomes" id="UP000242525">
    <property type="component" value="Unassembled WGS sequence"/>
</dbReference>
<dbReference type="GO" id="GO:0005576">
    <property type="term" value="C:extracellular region"/>
    <property type="evidence" value="ECO:0007669"/>
    <property type="project" value="UniProtKB-SubCell"/>
</dbReference>
<dbReference type="GO" id="GO:0046872">
    <property type="term" value="F:metal ion binding"/>
    <property type="evidence" value="ECO:0007669"/>
    <property type="project" value="UniProtKB-KW"/>
</dbReference>
<dbReference type="GO" id="GO:0004497">
    <property type="term" value="F:monooxygenase activity"/>
    <property type="evidence" value="ECO:0007669"/>
    <property type="project" value="UniProtKB-KW"/>
</dbReference>
<dbReference type="GO" id="GO:0030245">
    <property type="term" value="P:cellulose catabolic process"/>
    <property type="evidence" value="ECO:0007669"/>
    <property type="project" value="UniProtKB-KW"/>
</dbReference>
<dbReference type="CDD" id="cd21175">
    <property type="entry name" value="LPMO_AA9"/>
    <property type="match status" value="1"/>
</dbReference>
<dbReference type="Gene3D" id="2.70.50.70">
    <property type="match status" value="1"/>
</dbReference>
<dbReference type="InterPro" id="IPR049892">
    <property type="entry name" value="AA9"/>
</dbReference>
<dbReference type="InterPro" id="IPR005103">
    <property type="entry name" value="AA9_LPMO"/>
</dbReference>
<dbReference type="PANTHER" id="PTHR33353:SF6">
    <property type="entry name" value="ENDOGLUCANASE IV"/>
    <property type="match status" value="1"/>
</dbReference>
<dbReference type="PANTHER" id="PTHR33353">
    <property type="entry name" value="PUTATIVE (AFU_ORTHOLOGUE AFUA_1G12560)-RELATED"/>
    <property type="match status" value="1"/>
</dbReference>
<dbReference type="Pfam" id="PF03443">
    <property type="entry name" value="AA9"/>
    <property type="match status" value="1"/>
</dbReference>
<comment type="function">
    <text evidence="1">Lytic polysaccharide monooxygenase (LPMO) that depolymerizes crystalline and amorphous polysaccharides via the oxidation of scissile alpha- or beta-(1-4)-glycosidic bonds, yielding C1 or C4 oxidation products (By similarity). Catalysis by LPMOs requires the reduction of the active-site copper from Cu(II) to Cu(I) by a reducing agent and H(2)O(2) or O(2) as a cosubstrate (By similarity).</text>
</comment>
<comment type="catalytic activity">
    <reaction evidence="9">
        <text>[(1-&gt;4)-beta-D-glucosyl]n+m + reduced acceptor + O2 = 4-dehydro-beta-D-glucosyl-[(1-&gt;4)-beta-D-glucosyl]n-1 + [(1-&gt;4)-beta-D-glucosyl]m + acceptor + H2O.</text>
        <dbReference type="EC" id="1.14.99.56"/>
    </reaction>
</comment>
<comment type="cofactor">
    <cofactor evidence="3">
        <name>Cu(2+)</name>
        <dbReference type="ChEBI" id="CHEBI:29036"/>
    </cofactor>
    <text evidence="3">Binds 1 copper ion per subunit.</text>
</comment>
<comment type="subcellular location">
    <subcellularLocation>
        <location evidence="9">Secreted</location>
    </subcellularLocation>
</comment>
<comment type="biotechnology">
    <text evidence="2">Lignocellulose is the most abundant polymeric composite on Earth and is a recalcitrant but promising renewable substrate for industrial biotechnology applications. Together with cellobiose dehydrogenases (CDHs) an enzymatic system capable of oxidative cellulose cleavage is formed, which increases the efficiency of cellulases and put LPMOs at focus of biofuel research.</text>
</comment>
<comment type="similarity">
    <text evidence="8">Belongs to the polysaccharide monooxygenase AA9 family.</text>
</comment>
<accession>A0A0J9XBC9</accession>
<keyword id="KW-0119">Carbohydrate metabolism</keyword>
<keyword id="KW-0136">Cellulose degradation</keyword>
<keyword id="KW-0186">Copper</keyword>
<keyword id="KW-1015">Disulfide bond</keyword>
<keyword id="KW-0325">Glycoprotein</keyword>
<keyword id="KW-0479">Metal-binding</keyword>
<keyword id="KW-0503">Monooxygenase</keyword>
<keyword id="KW-0560">Oxidoreductase</keyword>
<keyword id="KW-0624">Polysaccharide degradation</keyword>
<keyword id="KW-0964">Secreted</keyword>
<keyword id="KW-0732">Signal</keyword>
<feature type="signal peptide" evidence="5">
    <location>
        <begin position="1"/>
        <end position="21"/>
    </location>
</feature>
<feature type="chain" id="PRO_5005325618" description="AA9 family lytic polysaccharide monooxygenase D">
    <location>
        <begin position="22"/>
        <end position="321"/>
    </location>
</feature>
<feature type="binding site" evidence="4">
    <location>
        <position position="22"/>
    </location>
    <ligand>
        <name>Cu(2+)</name>
        <dbReference type="ChEBI" id="CHEBI:29036"/>
        <note>catalytic</note>
    </ligand>
</feature>
<feature type="binding site" evidence="4">
    <location>
        <position position="105"/>
    </location>
    <ligand>
        <name>Cu(2+)</name>
        <dbReference type="ChEBI" id="CHEBI:29036"/>
        <note>catalytic</note>
    </ligand>
</feature>
<feature type="binding site" evidence="3">
    <location>
        <position position="178"/>
    </location>
    <ligand>
        <name>O2</name>
        <dbReference type="ChEBI" id="CHEBI:15379"/>
    </ligand>
</feature>
<feature type="binding site" evidence="3">
    <location>
        <position position="187"/>
    </location>
    <ligand>
        <name>O2</name>
        <dbReference type="ChEBI" id="CHEBI:15379"/>
    </ligand>
</feature>
<feature type="binding site" evidence="4">
    <location>
        <position position="189"/>
    </location>
    <ligand>
        <name>Cu(2+)</name>
        <dbReference type="ChEBI" id="CHEBI:29036"/>
        <note>catalytic</note>
    </ligand>
</feature>
<feature type="glycosylation site" description="N-linked (GlcNAc...) asparagine" evidence="6">
    <location>
        <position position="78"/>
    </location>
</feature>
<feature type="glycosylation site" description="N-linked (GlcNAc...) asparagine" evidence="6">
    <location>
        <position position="152"/>
    </location>
</feature>
<feature type="glycosylation site" description="N-linked (GlcNAc...) asparagine" evidence="6">
    <location>
        <position position="266"/>
    </location>
</feature>
<feature type="disulfide bond" evidence="2">
    <location>
        <begin position="75"/>
        <end position="192"/>
    </location>
</feature>
<feature type="disulfide bond" evidence="2">
    <location>
        <begin position="116"/>
        <end position="120"/>
    </location>
</feature>
<gene>
    <name evidence="7" type="primary">LPMO9D</name>
    <name type="ORF">BN980_GECA08s04487g</name>
</gene>
<protein>
    <recommendedName>
        <fullName evidence="7">AA9 family lytic polysaccharide monooxygenase D</fullName>
        <shortName evidence="7">LPMO9D</shortName>
        <ecNumber evidence="9">1.14.99.56</ecNumber>
    </recommendedName>
    <alternativeName>
        <fullName evidence="8">Cellulase LPMO9D</fullName>
    </alternativeName>
    <alternativeName>
        <fullName evidence="8">Endo-beta-1,4-glucanase LPMO9D</fullName>
        <shortName evidence="8">Endoglucanase LPMO9D</shortName>
    </alternativeName>
    <alternativeName>
        <fullName evidence="8">Glycosyl hydrolase 61 family protein LPMO9D</fullName>
    </alternativeName>
</protein>
<organism>
    <name type="scientific">Geotrichum candidum</name>
    <name type="common">Oospora lactis</name>
    <name type="synonym">Dipodascus geotrichum</name>
    <dbReference type="NCBI Taxonomy" id="1173061"/>
    <lineage>
        <taxon>Eukaryota</taxon>
        <taxon>Fungi</taxon>
        <taxon>Dikarya</taxon>
        <taxon>Ascomycota</taxon>
        <taxon>Saccharomycotina</taxon>
        <taxon>Dipodascomycetes</taxon>
        <taxon>Dipodascales</taxon>
        <taxon>Dipodascaceae</taxon>
        <taxon>Geotrichum</taxon>
    </lineage>
</organism>
<sequence>MRSTIVATFAAGLVVASLVAAHGIVTDIEIDGEWYTSSLVFEDPYKIPIPERISWSFFGSGNSPVADFTTRDIVCNGNASAAALVAEVDAGAEITFYWDTWPESHKGPVMTYLANCGSDCRTVDPGALFYFKIDHAGLEDGEWISDQIIANNLSYTITIPEDIAPGNYLIRHELLALHLASDELGAQFYPMCANLRISGSGIINPTGVQFPGAYKMDDPGILVNIYNDIDTYTIPGPPPYNSDSEFSDDDFESVAEISAASVSVFNSSDFIASTLTKSYSALASVYTKPSTSDFKLKKSFSLSSVSVPDGSSDNFDCNVNG</sequence>
<name>LP9D_GEOCN</name>